<reference key="1">
    <citation type="journal article" date="2004" name="Nature">
        <title>Genome evolution in yeasts.</title>
        <authorList>
            <person name="Dujon B."/>
            <person name="Sherman D."/>
            <person name="Fischer G."/>
            <person name="Durrens P."/>
            <person name="Casaregola S."/>
            <person name="Lafontaine I."/>
            <person name="de Montigny J."/>
            <person name="Marck C."/>
            <person name="Neuveglise C."/>
            <person name="Talla E."/>
            <person name="Goffard N."/>
            <person name="Frangeul L."/>
            <person name="Aigle M."/>
            <person name="Anthouard V."/>
            <person name="Babour A."/>
            <person name="Barbe V."/>
            <person name="Barnay S."/>
            <person name="Blanchin S."/>
            <person name="Beckerich J.-M."/>
            <person name="Beyne E."/>
            <person name="Bleykasten C."/>
            <person name="Boisrame A."/>
            <person name="Boyer J."/>
            <person name="Cattolico L."/>
            <person name="Confanioleri F."/>
            <person name="de Daruvar A."/>
            <person name="Despons L."/>
            <person name="Fabre E."/>
            <person name="Fairhead C."/>
            <person name="Ferry-Dumazet H."/>
            <person name="Groppi A."/>
            <person name="Hantraye F."/>
            <person name="Hennequin C."/>
            <person name="Jauniaux N."/>
            <person name="Joyet P."/>
            <person name="Kachouri R."/>
            <person name="Kerrest A."/>
            <person name="Koszul R."/>
            <person name="Lemaire M."/>
            <person name="Lesur I."/>
            <person name="Ma L."/>
            <person name="Muller H."/>
            <person name="Nicaud J.-M."/>
            <person name="Nikolski M."/>
            <person name="Oztas S."/>
            <person name="Ozier-Kalogeropoulos O."/>
            <person name="Pellenz S."/>
            <person name="Potier S."/>
            <person name="Richard G.-F."/>
            <person name="Straub M.-L."/>
            <person name="Suleau A."/>
            <person name="Swennen D."/>
            <person name="Tekaia F."/>
            <person name="Wesolowski-Louvel M."/>
            <person name="Westhof E."/>
            <person name="Wirth B."/>
            <person name="Zeniou-Meyer M."/>
            <person name="Zivanovic Y."/>
            <person name="Bolotin-Fukuhara M."/>
            <person name="Thierry A."/>
            <person name="Bouchier C."/>
            <person name="Caudron B."/>
            <person name="Scarpelli C."/>
            <person name="Gaillardin C."/>
            <person name="Weissenbach J."/>
            <person name="Wincker P."/>
            <person name="Souciet J.-L."/>
        </authorList>
    </citation>
    <scope>NUCLEOTIDE SEQUENCE [LARGE SCALE GENOMIC DNA]</scope>
    <source>
        <strain>ATCC 8585 / CBS 2359 / DSM 70799 / NBRC 1267 / NRRL Y-1140 / WM37</strain>
    </source>
</reference>
<proteinExistence type="inferred from homology"/>
<gene>
    <name evidence="1" type="primary">TRM82</name>
    <name type="ordered locus">KLLA0D17116g</name>
</gene>
<feature type="chain" id="PRO_0000370521" description="tRNA (guanine-N(7)-)-methyltransferase non-catalytic subunit TRM82">
    <location>
        <begin position="1"/>
        <end position="443"/>
    </location>
</feature>
<feature type="repeat" description="WD 1">
    <location>
        <begin position="97"/>
        <end position="137"/>
    </location>
</feature>
<feature type="repeat" description="WD 2">
    <location>
        <begin position="193"/>
        <end position="235"/>
    </location>
</feature>
<feature type="repeat" description="WD 3">
    <location>
        <begin position="239"/>
        <end position="279"/>
    </location>
</feature>
<feature type="region of interest" description="Disordered" evidence="2">
    <location>
        <begin position="67"/>
        <end position="93"/>
    </location>
</feature>
<accession>Q6CQH2</accession>
<protein>
    <recommendedName>
        <fullName evidence="1">tRNA (guanine-N(7)-)-methyltransferase non-catalytic subunit TRM82</fullName>
    </recommendedName>
    <alternativeName>
        <fullName evidence="1">Transfer RNA methyltransferase 82</fullName>
    </alternativeName>
</protein>
<dbReference type="EMBL" id="CR382124">
    <property type="protein sequence ID" value="CAH00913.1"/>
    <property type="molecule type" value="Genomic_DNA"/>
</dbReference>
<dbReference type="RefSeq" id="XP_453817.1">
    <property type="nucleotide sequence ID" value="XM_453817.1"/>
</dbReference>
<dbReference type="SMR" id="Q6CQH2"/>
<dbReference type="FunCoup" id="Q6CQH2">
    <property type="interactions" value="290"/>
</dbReference>
<dbReference type="STRING" id="284590.Q6CQH2"/>
<dbReference type="PaxDb" id="284590-Q6CQH2"/>
<dbReference type="KEGG" id="kla:KLLA0_D17116g"/>
<dbReference type="eggNOG" id="KOG3914">
    <property type="taxonomic scope" value="Eukaryota"/>
</dbReference>
<dbReference type="HOGENOM" id="CLU_022082_0_0_1"/>
<dbReference type="InParanoid" id="Q6CQH2"/>
<dbReference type="OMA" id="VKHWLFG"/>
<dbReference type="UniPathway" id="UPA00989"/>
<dbReference type="Proteomes" id="UP000000598">
    <property type="component" value="Chromosome D"/>
</dbReference>
<dbReference type="GO" id="GO:0005829">
    <property type="term" value="C:cytosol"/>
    <property type="evidence" value="ECO:0007669"/>
    <property type="project" value="TreeGrafter"/>
</dbReference>
<dbReference type="GO" id="GO:0005634">
    <property type="term" value="C:nucleus"/>
    <property type="evidence" value="ECO:0007669"/>
    <property type="project" value="UniProtKB-SubCell"/>
</dbReference>
<dbReference type="GO" id="GO:0043527">
    <property type="term" value="C:tRNA methyltransferase complex"/>
    <property type="evidence" value="ECO:0007669"/>
    <property type="project" value="TreeGrafter"/>
</dbReference>
<dbReference type="GO" id="GO:0106004">
    <property type="term" value="P:tRNA (guanine-N7)-methylation"/>
    <property type="evidence" value="ECO:0007669"/>
    <property type="project" value="UniProtKB-UniRule"/>
</dbReference>
<dbReference type="Gene3D" id="2.130.10.10">
    <property type="entry name" value="YVTN repeat-like/Quinoprotein amine dehydrogenase"/>
    <property type="match status" value="1"/>
</dbReference>
<dbReference type="HAMAP" id="MF_03056">
    <property type="entry name" value="TRM82"/>
    <property type="match status" value="1"/>
</dbReference>
<dbReference type="InterPro" id="IPR028884">
    <property type="entry name" value="Trm82"/>
</dbReference>
<dbReference type="InterPro" id="IPR015943">
    <property type="entry name" value="WD40/YVTN_repeat-like_dom_sf"/>
</dbReference>
<dbReference type="InterPro" id="IPR036322">
    <property type="entry name" value="WD40_repeat_dom_sf"/>
</dbReference>
<dbReference type="InterPro" id="IPR001680">
    <property type="entry name" value="WD40_rpt"/>
</dbReference>
<dbReference type="PANTHER" id="PTHR16288:SF0">
    <property type="entry name" value="TRNA (GUANINE-N(7)-)-METHYLTRANSFERASE NON-CATALYTIC SUBUNIT WDR4"/>
    <property type="match status" value="1"/>
</dbReference>
<dbReference type="PANTHER" id="PTHR16288">
    <property type="entry name" value="WD40 REPEAT PROTEIN 4"/>
    <property type="match status" value="1"/>
</dbReference>
<dbReference type="SMART" id="SM00320">
    <property type="entry name" value="WD40"/>
    <property type="match status" value="3"/>
</dbReference>
<dbReference type="SUPFAM" id="SSF50978">
    <property type="entry name" value="WD40 repeat-like"/>
    <property type="match status" value="1"/>
</dbReference>
<keyword id="KW-0539">Nucleus</keyword>
<keyword id="KW-1185">Reference proteome</keyword>
<keyword id="KW-0677">Repeat</keyword>
<keyword id="KW-0819">tRNA processing</keyword>
<keyword id="KW-0853">WD repeat</keyword>
<comment type="function">
    <text evidence="1">Required for the formation of N(7)-methylguanine at position 46 (m7G46) in tRNA. In the complex, it is required to stabilize and induce conformational changes of the catalytic subunit.</text>
</comment>
<comment type="pathway">
    <text evidence="1">tRNA modification; N(7)-methylguanine-tRNA biosynthesis.</text>
</comment>
<comment type="subunit">
    <text evidence="1">Forms a heterodimer with the catalytic subunit TRM8.</text>
</comment>
<comment type="subcellular location">
    <subcellularLocation>
        <location evidence="1">Nucleus</location>
    </subcellularLocation>
</comment>
<comment type="similarity">
    <text evidence="1">Belongs to the WD repeat TRM82 family.</text>
</comment>
<evidence type="ECO:0000255" key="1">
    <source>
        <dbReference type="HAMAP-Rule" id="MF_03056"/>
    </source>
</evidence>
<evidence type="ECO:0000256" key="2">
    <source>
        <dbReference type="SAM" id="MobiDB-lite"/>
    </source>
</evidence>
<name>TRM82_KLULA</name>
<organism>
    <name type="scientific">Kluyveromyces lactis (strain ATCC 8585 / CBS 2359 / DSM 70799 / NBRC 1267 / NRRL Y-1140 / WM37)</name>
    <name type="common">Yeast</name>
    <name type="synonym">Candida sphaerica</name>
    <dbReference type="NCBI Taxonomy" id="284590"/>
    <lineage>
        <taxon>Eukaryota</taxon>
        <taxon>Fungi</taxon>
        <taxon>Dikarya</taxon>
        <taxon>Ascomycota</taxon>
        <taxon>Saccharomycotina</taxon>
        <taxon>Saccharomycetes</taxon>
        <taxon>Saccharomycetales</taxon>
        <taxon>Saccharomycetaceae</taxon>
        <taxon>Kluyveromyces</taxon>
    </lineage>
</organism>
<sequence length="443" mass="50058">MLHPFQSVLLNRDGSLLFCVVKNEIKAFKVEGNGYVLRGEWVDDLDNTPLIKEKVLKEQARQLIENASKKLKTNDGEPVAQPKKQAKVPKPGPGAPPVYQYIRNLALSRDGKLLLACTDSDKAAVIFNIDLDDKDNIFKLIKRQPYPKRPNAITTSVDDKDLILADKFGDVYSMPIQNDVITSINAEKAPILGHVSMLTDVNMLTDSEGKQYIVTADRDEHIRISHYPQSFIVDKWLFGHEEFVSTICIPEWSDKLLFSAGGDKFVFSWNWKTGALLFKFDYTDLIQKYLTSDHLAPERFQNEKGDVIEYSVAKIVTLKDVPYIAFFVEATKVLFVLKVDEKSGALSLHQTLEFDEKIVSLTSALDVNTLCISLDNRDNQDCDLVKLLLLEGDVFIEQKDTNSQLMNTIRSTLKSDLIANVEAGDVYPLYHNASLRKHGEHFS</sequence>